<accession>Q49XH9</accession>
<dbReference type="EC" id="4.2.1.20" evidence="1"/>
<dbReference type="EMBL" id="AP008934">
    <property type="protein sequence ID" value="BAE18518.1"/>
    <property type="molecule type" value="Genomic_DNA"/>
</dbReference>
<dbReference type="RefSeq" id="WP_011303149.1">
    <property type="nucleotide sequence ID" value="NZ_MTGA01000038.1"/>
</dbReference>
<dbReference type="SMR" id="Q49XH9"/>
<dbReference type="GeneID" id="3617101"/>
<dbReference type="KEGG" id="ssp:SSP1373"/>
<dbReference type="PATRIC" id="fig|342451.11.peg.1378"/>
<dbReference type="eggNOG" id="COG0159">
    <property type="taxonomic scope" value="Bacteria"/>
</dbReference>
<dbReference type="HOGENOM" id="CLU_016734_0_0_9"/>
<dbReference type="OrthoDB" id="9804578at2"/>
<dbReference type="UniPathway" id="UPA00035">
    <property type="reaction ID" value="UER00044"/>
</dbReference>
<dbReference type="Proteomes" id="UP000006371">
    <property type="component" value="Chromosome"/>
</dbReference>
<dbReference type="GO" id="GO:0005829">
    <property type="term" value="C:cytosol"/>
    <property type="evidence" value="ECO:0007669"/>
    <property type="project" value="TreeGrafter"/>
</dbReference>
<dbReference type="GO" id="GO:0004834">
    <property type="term" value="F:tryptophan synthase activity"/>
    <property type="evidence" value="ECO:0007669"/>
    <property type="project" value="UniProtKB-UniRule"/>
</dbReference>
<dbReference type="CDD" id="cd04724">
    <property type="entry name" value="Tryptophan_synthase_alpha"/>
    <property type="match status" value="1"/>
</dbReference>
<dbReference type="Gene3D" id="3.20.20.70">
    <property type="entry name" value="Aldolase class I"/>
    <property type="match status" value="1"/>
</dbReference>
<dbReference type="HAMAP" id="MF_00131">
    <property type="entry name" value="Trp_synth_alpha"/>
    <property type="match status" value="1"/>
</dbReference>
<dbReference type="InterPro" id="IPR013785">
    <property type="entry name" value="Aldolase_TIM"/>
</dbReference>
<dbReference type="InterPro" id="IPR011060">
    <property type="entry name" value="RibuloseP-bd_barrel"/>
</dbReference>
<dbReference type="InterPro" id="IPR018204">
    <property type="entry name" value="Trp_synthase_alpha_AS"/>
</dbReference>
<dbReference type="InterPro" id="IPR002028">
    <property type="entry name" value="Trp_synthase_suA"/>
</dbReference>
<dbReference type="NCBIfam" id="TIGR00262">
    <property type="entry name" value="trpA"/>
    <property type="match status" value="1"/>
</dbReference>
<dbReference type="PANTHER" id="PTHR43406:SF1">
    <property type="entry name" value="TRYPTOPHAN SYNTHASE ALPHA CHAIN, CHLOROPLASTIC"/>
    <property type="match status" value="1"/>
</dbReference>
<dbReference type="PANTHER" id="PTHR43406">
    <property type="entry name" value="TRYPTOPHAN SYNTHASE, ALPHA CHAIN"/>
    <property type="match status" value="1"/>
</dbReference>
<dbReference type="Pfam" id="PF00290">
    <property type="entry name" value="Trp_syntA"/>
    <property type="match status" value="1"/>
</dbReference>
<dbReference type="SUPFAM" id="SSF51366">
    <property type="entry name" value="Ribulose-phoshate binding barrel"/>
    <property type="match status" value="1"/>
</dbReference>
<dbReference type="PROSITE" id="PS00167">
    <property type="entry name" value="TRP_SYNTHASE_ALPHA"/>
    <property type="match status" value="1"/>
</dbReference>
<reference key="1">
    <citation type="journal article" date="2005" name="Proc. Natl. Acad. Sci. U.S.A.">
        <title>Whole genome sequence of Staphylococcus saprophyticus reveals the pathogenesis of uncomplicated urinary tract infection.</title>
        <authorList>
            <person name="Kuroda M."/>
            <person name="Yamashita A."/>
            <person name="Hirakawa H."/>
            <person name="Kumano M."/>
            <person name="Morikawa K."/>
            <person name="Higashide M."/>
            <person name="Maruyama A."/>
            <person name="Inose Y."/>
            <person name="Matoba K."/>
            <person name="Toh H."/>
            <person name="Kuhara S."/>
            <person name="Hattori M."/>
            <person name="Ohta T."/>
        </authorList>
    </citation>
    <scope>NUCLEOTIDE SEQUENCE [LARGE SCALE GENOMIC DNA]</scope>
    <source>
        <strain>ATCC 15305 / DSM 20229 / NCIMB 8711 / NCTC 7292 / S-41</strain>
    </source>
</reference>
<organism>
    <name type="scientific">Staphylococcus saprophyticus subsp. saprophyticus (strain ATCC 15305 / DSM 20229 / NCIMB 8711 / NCTC 7292 / S-41)</name>
    <dbReference type="NCBI Taxonomy" id="342451"/>
    <lineage>
        <taxon>Bacteria</taxon>
        <taxon>Bacillati</taxon>
        <taxon>Bacillota</taxon>
        <taxon>Bacilli</taxon>
        <taxon>Bacillales</taxon>
        <taxon>Staphylococcaceae</taxon>
        <taxon>Staphylococcus</taxon>
    </lineage>
</organism>
<comment type="function">
    <text evidence="1">The alpha subunit is responsible for the aldol cleavage of indoleglycerol phosphate to indole and glyceraldehyde 3-phosphate.</text>
</comment>
<comment type="catalytic activity">
    <reaction evidence="1">
        <text>(1S,2R)-1-C-(indol-3-yl)glycerol 3-phosphate + L-serine = D-glyceraldehyde 3-phosphate + L-tryptophan + H2O</text>
        <dbReference type="Rhea" id="RHEA:10532"/>
        <dbReference type="ChEBI" id="CHEBI:15377"/>
        <dbReference type="ChEBI" id="CHEBI:33384"/>
        <dbReference type="ChEBI" id="CHEBI:57912"/>
        <dbReference type="ChEBI" id="CHEBI:58866"/>
        <dbReference type="ChEBI" id="CHEBI:59776"/>
        <dbReference type="EC" id="4.2.1.20"/>
    </reaction>
</comment>
<comment type="pathway">
    <text evidence="1">Amino-acid biosynthesis; L-tryptophan biosynthesis; L-tryptophan from chorismate: step 5/5.</text>
</comment>
<comment type="subunit">
    <text evidence="1">Tetramer of two alpha and two beta chains.</text>
</comment>
<comment type="similarity">
    <text evidence="1">Belongs to the TrpA family.</text>
</comment>
<protein>
    <recommendedName>
        <fullName evidence="1">Tryptophan synthase alpha chain</fullName>
        <ecNumber evidence="1">4.2.1.20</ecNumber>
    </recommendedName>
</protein>
<name>TRPA_STAS1</name>
<keyword id="KW-0028">Amino-acid biosynthesis</keyword>
<keyword id="KW-0057">Aromatic amino acid biosynthesis</keyword>
<keyword id="KW-0456">Lyase</keyword>
<keyword id="KW-1185">Reference proteome</keyword>
<keyword id="KW-0822">Tryptophan biosynthesis</keyword>
<feature type="chain" id="PRO_1000018293" description="Tryptophan synthase alpha chain">
    <location>
        <begin position="1"/>
        <end position="241"/>
    </location>
</feature>
<feature type="active site" description="Proton acceptor" evidence="1">
    <location>
        <position position="31"/>
    </location>
</feature>
<feature type="active site" description="Proton acceptor" evidence="1">
    <location>
        <position position="42"/>
    </location>
</feature>
<evidence type="ECO:0000255" key="1">
    <source>
        <dbReference type="HAMAP-Rule" id="MF_00131"/>
    </source>
</evidence>
<proteinExistence type="inferred from homology"/>
<sequence length="241" mass="26917">MHKLFVPYVMGNRDFIENVKTLSEAGADIVEVGVPFSDPVADGPVIMNVGNKAIQEGVNIQYIFDQLTENQDEIQSKYVLMTYYNIINHYGELAFLNACEQAGVYGLIIPDLPHELVQQLKARHPERKTNIISLIAMTTSNTRSHQIAKDAEGFIYTVTMNATTGEDGKFHPELKNRIKDIKAHTEVPVVAGFGIRTAAHVKDIIEASDGVVIGSEIVKRFENDDKQTTIEYLKTIRNVLN</sequence>
<gene>
    <name evidence="1" type="primary">trpA</name>
    <name type="ordered locus">SSP1373</name>
</gene>